<organism>
    <name type="scientific">Odontomachus monticola</name>
    <name type="common">Trap-jaw ant</name>
    <dbReference type="NCBI Taxonomy" id="613454"/>
    <lineage>
        <taxon>Eukaryota</taxon>
        <taxon>Metazoa</taxon>
        <taxon>Ecdysozoa</taxon>
        <taxon>Arthropoda</taxon>
        <taxon>Hexapoda</taxon>
        <taxon>Insecta</taxon>
        <taxon>Pterygota</taxon>
        <taxon>Neoptera</taxon>
        <taxon>Endopterygota</taxon>
        <taxon>Hymenoptera</taxon>
        <taxon>Apocrita</taxon>
        <taxon>Aculeata</taxon>
        <taxon>Formicoidea</taxon>
        <taxon>Formicidae</taxon>
        <taxon>Ponerinae</taxon>
        <taxon>Ponerini</taxon>
        <taxon>Odontomachus</taxon>
    </lineage>
</organism>
<name>TX12A_ODOMO</name>
<accession>A0A348G5V8</accession>
<sequence>MKPSGITFAFLVVFMMAIMYNSVQAAAIADADADAEAKAFADAFAEAGWGSIFKTVGKMIAKAAVKAAPEAISAMASQNEK</sequence>
<dbReference type="EMBL" id="FX985495">
    <property type="protein sequence ID" value="BBF97831.1"/>
    <property type="molecule type" value="mRNA"/>
</dbReference>
<dbReference type="SMR" id="A0A348G5V8"/>
<dbReference type="GO" id="GO:0005576">
    <property type="term" value="C:extracellular region"/>
    <property type="evidence" value="ECO:0007669"/>
    <property type="project" value="UniProtKB-SubCell"/>
</dbReference>
<dbReference type="GO" id="GO:0090729">
    <property type="term" value="F:toxin activity"/>
    <property type="evidence" value="ECO:0007669"/>
    <property type="project" value="UniProtKB-KW"/>
</dbReference>
<dbReference type="GO" id="GO:0042742">
    <property type="term" value="P:defense response to bacterium"/>
    <property type="evidence" value="ECO:0007669"/>
    <property type="project" value="UniProtKB-KW"/>
</dbReference>
<dbReference type="GO" id="GO:0031640">
    <property type="term" value="P:killing of cells of another organism"/>
    <property type="evidence" value="ECO:0007669"/>
    <property type="project" value="UniProtKB-KW"/>
</dbReference>
<dbReference type="InterPro" id="IPR049518">
    <property type="entry name" value="Pilosulin"/>
</dbReference>
<dbReference type="Pfam" id="PF17499">
    <property type="entry name" value="Pilosulin"/>
    <property type="match status" value="1"/>
</dbReference>
<evidence type="ECO:0000250" key="1">
    <source>
        <dbReference type="UniProtKB" id="A0A348G5W2"/>
    </source>
</evidence>
<evidence type="ECO:0000255" key="2"/>
<evidence type="ECO:0000269" key="3">
    <source>
    </source>
</evidence>
<evidence type="ECO:0000269" key="4">
    <source>
    </source>
</evidence>
<evidence type="ECO:0000303" key="5">
    <source>
    </source>
</evidence>
<evidence type="ECO:0000305" key="6"/>
<evidence type="ECO:0000305" key="7">
    <source>
    </source>
</evidence>
<evidence type="ECO:0000305" key="8">
    <source>
    </source>
</evidence>
<evidence type="ECO:0000312" key="9">
    <source>
        <dbReference type="EMBL" id="BBF97831.1"/>
    </source>
</evidence>
<protein>
    <recommendedName>
        <fullName evidence="1">U-poneritoxin(01)-Om2a</fullName>
        <shortName evidence="1">U-PONTX(01)-Om2a</shortName>
    </recommendedName>
    <alternativeName>
        <fullName evidence="9">Pilosulin-like peptide 2</fullName>
        <shortName evidence="5">PLP2</shortName>
    </alternativeName>
    <alternativeName>
        <fullName evidence="6">Poneratoxin</fullName>
    </alternativeName>
</protein>
<keyword id="KW-0044">Antibiotic</keyword>
<keyword id="KW-0929">Antimicrobial</keyword>
<keyword id="KW-0204">Cytolysis</keyword>
<keyword id="KW-0903">Direct protein sequencing</keyword>
<keyword id="KW-0354">Hemolysis</keyword>
<keyword id="KW-0964">Secreted</keyword>
<keyword id="KW-0732">Signal</keyword>
<keyword id="KW-0800">Toxin</keyword>
<proteinExistence type="evidence at protein level"/>
<feature type="signal peptide" evidence="2">
    <location>
        <begin position="1"/>
        <end position="25"/>
    </location>
</feature>
<feature type="propeptide" id="PRO_0000447069" evidence="7">
    <location>
        <begin position="26"/>
        <end position="47"/>
    </location>
</feature>
<feature type="peptide" id="PRO_5016905946" description="U-poneritoxin(01)-Om2a" evidence="4 7">
    <location>
        <begin position="48"/>
        <end position="80"/>
    </location>
</feature>
<reference key="1">
    <citation type="journal article" date="2017" name="Toxins">
        <title>Combined venom gland transcriptomic and venom peptidomic analysis of the predatory ant Odontomachus monticola.</title>
        <authorList>
            <person name="Kazuma K."/>
            <person name="Masuko K."/>
            <person name="Konno K."/>
            <person name="Inagaki H."/>
        </authorList>
    </citation>
    <scope>NUCLEOTIDE SEQUENCE [MRNA]</scope>
    <scope>PROTEIN SEQUENCE OF 48-66</scope>
    <scope>MASS SPECTROMETRY</scope>
    <scope>SUBCELLULAR LOCATION</scope>
    <source>
        <tissue>Venom</tissue>
        <tissue>Venom gland</tissue>
    </source>
</reference>
<reference key="2">
    <citation type="journal article" date="2019" name="Toxins">
        <title>Mass spectrometry analysis and biological characterization of the predatory ant Odontomachus monticola venom and venom sac components.</title>
        <authorList>
            <person name="Tani N."/>
            <person name="Kazuma K."/>
            <person name="Ohtsuka Y."/>
            <person name="Shigeri Y."/>
            <person name="Masuko K."/>
            <person name="Konno K."/>
            <person name="Inagaki H."/>
        </authorList>
    </citation>
    <scope>FUNCTION</scope>
    <scope>IDENTIFICATION BY MASS SPECTROMETRY</scope>
    <scope>SYNTHESIS OF PEPTIDE WITH UNKNOWN TERMINAL RESIDUES</scope>
    <scope>SUBCELLULAR LOCATION</scope>
    <source>
        <tissue>Venom</tissue>
    </source>
</reference>
<comment type="function">
    <text evidence="4">Cationic amphipathic alpha-helical peptide with antimicrobial activities against E.coli (MIC=6.2 uM), S.aureus (MIC=6.2 uM), and S.cerevisiae (MIC=50 uM). Also shows histamine-releasing activity (30.1% at 10 uM) and a weak hemolytic activity (10.4% at 50 uM).</text>
</comment>
<comment type="subcellular location">
    <subcellularLocation>
        <location evidence="3">Secreted</location>
    </subcellularLocation>
</comment>
<comment type="tissue specificity">
    <text evidence="7">Expressed by the venom gland.</text>
</comment>
<comment type="PTM">
    <text evidence="7 8">Truncated sequences of this peptide have also been found in the venom. It is possible they have been cleaved in the venom.</text>
</comment>
<comment type="mass spectrometry">
    <text>Monoisotopic mass.</text>
</comment>
<comment type="similarity">
    <text evidence="6">Belongs to the formicidae venom precursor-01 superfamily.</text>
</comment>